<organism>
    <name type="scientific">Homo sapiens</name>
    <name type="common">Human</name>
    <dbReference type="NCBI Taxonomy" id="9606"/>
    <lineage>
        <taxon>Eukaryota</taxon>
        <taxon>Metazoa</taxon>
        <taxon>Chordata</taxon>
        <taxon>Craniata</taxon>
        <taxon>Vertebrata</taxon>
        <taxon>Euteleostomi</taxon>
        <taxon>Mammalia</taxon>
        <taxon>Eutheria</taxon>
        <taxon>Euarchontoglires</taxon>
        <taxon>Primates</taxon>
        <taxon>Haplorrhini</taxon>
        <taxon>Catarrhini</taxon>
        <taxon>Hominidae</taxon>
        <taxon>Homo</taxon>
    </lineage>
</organism>
<dbReference type="EMBL" id="U17195">
    <property type="protein sequence ID" value="AAA92354.2"/>
    <property type="molecule type" value="mRNA"/>
</dbReference>
<dbReference type="EMBL" id="AB002309">
    <property type="protein sequence ID" value="BAA20770.2"/>
    <property type="status" value="ALT_INIT"/>
    <property type="molecule type" value="mRNA"/>
</dbReference>
<dbReference type="EMBL" id="AL049781">
    <property type="status" value="NOT_ANNOTATED_CDS"/>
    <property type="molecule type" value="Genomic_DNA"/>
</dbReference>
<dbReference type="EMBL" id="AL117672">
    <property type="status" value="NOT_ANNOTATED_CDS"/>
    <property type="molecule type" value="Genomic_DNA"/>
</dbReference>
<dbReference type="EMBL" id="AL132988">
    <property type="status" value="NOT_ANNOTATED_CDS"/>
    <property type="molecule type" value="Genomic_DNA"/>
</dbReference>
<dbReference type="EMBL" id="AL136298">
    <property type="status" value="NOT_ANNOTATED_CDS"/>
    <property type="molecule type" value="Genomic_DNA"/>
</dbReference>
<dbReference type="EMBL" id="CH471078">
    <property type="protein sequence ID" value="EAW65931.1"/>
    <property type="molecule type" value="Genomic_DNA"/>
</dbReference>
<dbReference type="EMBL" id="BC150185">
    <property type="protein sequence ID" value="AAI50186.1"/>
    <property type="molecule type" value="mRNA"/>
</dbReference>
<dbReference type="EMBL" id="BC150288">
    <property type="protein sequence ID" value="AAI50289.1"/>
    <property type="molecule type" value="mRNA"/>
</dbReference>
<dbReference type="EMBL" id="BC154413">
    <property type="protein sequence ID" value="AAI54414.1"/>
    <property type="molecule type" value="mRNA"/>
</dbReference>
<dbReference type="CCDS" id="CCDS9644.1">
    <molecule id="Q13023-1"/>
</dbReference>
<dbReference type="RefSeq" id="NP_004265.3">
    <molecule id="Q13023-1"/>
    <property type="nucleotide sequence ID" value="NM_004274.4"/>
</dbReference>
<dbReference type="RefSeq" id="XP_047287923.1">
    <molecule id="Q13023-1"/>
    <property type="nucleotide sequence ID" value="XM_047431967.1"/>
</dbReference>
<dbReference type="RefSeq" id="XP_047287924.1">
    <molecule id="Q13023-1"/>
    <property type="nucleotide sequence ID" value="XM_047431968.1"/>
</dbReference>
<dbReference type="RefSeq" id="XP_047287925.1">
    <molecule id="Q13023-1"/>
    <property type="nucleotide sequence ID" value="XM_047431969.1"/>
</dbReference>
<dbReference type="RefSeq" id="XP_047287926.1">
    <molecule id="Q13023-1"/>
    <property type="nucleotide sequence ID" value="XM_047431970.1"/>
</dbReference>
<dbReference type="BioGRID" id="114857">
    <property type="interactions" value="17"/>
</dbReference>
<dbReference type="CORUM" id="Q13023"/>
<dbReference type="ELM" id="Q13023"/>
<dbReference type="FunCoup" id="Q13023">
    <property type="interactions" value="126"/>
</dbReference>
<dbReference type="IntAct" id="Q13023">
    <property type="interactions" value="18"/>
</dbReference>
<dbReference type="MINT" id="Q13023"/>
<dbReference type="STRING" id="9606.ENSP00000280979"/>
<dbReference type="GlyCosmos" id="Q13023">
    <property type="glycosylation" value="1 site, 1 glycan"/>
</dbReference>
<dbReference type="GlyGen" id="Q13023">
    <property type="glycosylation" value="3 sites, 1 O-linked glycan (3 sites)"/>
</dbReference>
<dbReference type="iPTMnet" id="Q13023"/>
<dbReference type="PhosphoSitePlus" id="Q13023"/>
<dbReference type="BioMuta" id="AKAP6"/>
<dbReference type="DMDM" id="116241243"/>
<dbReference type="jPOST" id="Q13023"/>
<dbReference type="MassIVE" id="Q13023"/>
<dbReference type="PaxDb" id="9606-ENSP00000280979"/>
<dbReference type="PeptideAtlas" id="Q13023"/>
<dbReference type="ProteomicsDB" id="1788"/>
<dbReference type="ProteomicsDB" id="59109">
    <molecule id="Q13023-1"/>
</dbReference>
<dbReference type="Antibodypedia" id="23117">
    <property type="antibodies" value="147 antibodies from 28 providers"/>
</dbReference>
<dbReference type="DNASU" id="9472"/>
<dbReference type="Ensembl" id="ENST00000280979.9">
    <molecule id="Q13023-1"/>
    <property type="protein sequence ID" value="ENSP00000280979.4"/>
    <property type="gene ID" value="ENSG00000151320.11"/>
</dbReference>
<dbReference type="Ensembl" id="ENST00000557354.5">
    <molecule id="Q13023-2"/>
    <property type="protein sequence ID" value="ENSP00000450531.1"/>
    <property type="gene ID" value="ENSG00000151320.11"/>
</dbReference>
<dbReference type="GeneID" id="9472"/>
<dbReference type="KEGG" id="hsa:9472"/>
<dbReference type="MANE-Select" id="ENST00000280979.9">
    <property type="protein sequence ID" value="ENSP00000280979.4"/>
    <property type="RefSeq nucleotide sequence ID" value="NM_004274.5"/>
    <property type="RefSeq protein sequence ID" value="NP_004265.3"/>
</dbReference>
<dbReference type="UCSC" id="uc001wrq.4">
    <molecule id="Q13023-1"/>
    <property type="organism name" value="human"/>
</dbReference>
<dbReference type="AGR" id="HGNC:376"/>
<dbReference type="CTD" id="9472"/>
<dbReference type="DisGeNET" id="9472"/>
<dbReference type="GeneCards" id="AKAP6"/>
<dbReference type="HGNC" id="HGNC:376">
    <property type="gene designation" value="AKAP6"/>
</dbReference>
<dbReference type="HPA" id="ENSG00000151320">
    <property type="expression patterns" value="Group enriched (brain, heart muscle, retina, skeletal muscle, tongue)"/>
</dbReference>
<dbReference type="MIM" id="604691">
    <property type="type" value="gene"/>
</dbReference>
<dbReference type="neXtProt" id="NX_Q13023"/>
<dbReference type="OpenTargets" id="ENSG00000151320"/>
<dbReference type="PharmGKB" id="PA24670"/>
<dbReference type="VEuPathDB" id="HostDB:ENSG00000151320"/>
<dbReference type="eggNOG" id="ENOG502QSMH">
    <property type="taxonomic scope" value="Eukaryota"/>
</dbReference>
<dbReference type="GeneTree" id="ENSGT00810000125473"/>
<dbReference type="HOGENOM" id="CLU_231193_0_0_1"/>
<dbReference type="InParanoid" id="Q13023"/>
<dbReference type="OMA" id="INCPPIR"/>
<dbReference type="OrthoDB" id="10041151at2759"/>
<dbReference type="PAN-GO" id="Q13023">
    <property type="GO annotations" value="4 GO annotations based on evolutionary models"/>
</dbReference>
<dbReference type="PhylomeDB" id="Q13023"/>
<dbReference type="TreeFam" id="TF105405"/>
<dbReference type="PathwayCommons" id="Q13023"/>
<dbReference type="SignaLink" id="Q13023"/>
<dbReference type="BioGRID-ORCS" id="9472">
    <property type="hits" value="14 hits in 1154 CRISPR screens"/>
</dbReference>
<dbReference type="ChiTaRS" id="AKAP6">
    <property type="organism name" value="human"/>
</dbReference>
<dbReference type="GeneWiki" id="AKAP6"/>
<dbReference type="GenomeRNAi" id="9472"/>
<dbReference type="Pharos" id="Q13023">
    <property type="development level" value="Tbio"/>
</dbReference>
<dbReference type="PRO" id="PR:Q13023"/>
<dbReference type="Proteomes" id="UP000005640">
    <property type="component" value="Chromosome 14"/>
</dbReference>
<dbReference type="RNAct" id="Q13023">
    <property type="molecule type" value="protein"/>
</dbReference>
<dbReference type="Bgee" id="ENSG00000151320">
    <property type="expression patterns" value="Expressed in cortical plate and 151 other cell types or tissues"/>
</dbReference>
<dbReference type="ExpressionAtlas" id="Q13023">
    <property type="expression patterns" value="baseline and differential"/>
</dbReference>
<dbReference type="GO" id="GO:0034704">
    <property type="term" value="C:calcium channel complex"/>
    <property type="evidence" value="ECO:0000314"/>
    <property type="project" value="BHF-UCL"/>
</dbReference>
<dbReference type="GO" id="GO:0005901">
    <property type="term" value="C:caveola"/>
    <property type="evidence" value="ECO:0000250"/>
    <property type="project" value="BHF-UCL"/>
</dbReference>
<dbReference type="GO" id="GO:0005737">
    <property type="term" value="C:cytoplasm"/>
    <property type="evidence" value="ECO:0000250"/>
    <property type="project" value="BHF-UCL"/>
</dbReference>
<dbReference type="GO" id="GO:0014704">
    <property type="term" value="C:intercalated disc"/>
    <property type="evidence" value="ECO:0000250"/>
    <property type="project" value="BHF-UCL"/>
</dbReference>
<dbReference type="GO" id="GO:0014701">
    <property type="term" value="C:junctional sarcoplasmic reticulum membrane"/>
    <property type="evidence" value="ECO:0000250"/>
    <property type="project" value="BHF-UCL"/>
</dbReference>
<dbReference type="GO" id="GO:0005635">
    <property type="term" value="C:nuclear envelope"/>
    <property type="evidence" value="ECO:0000314"/>
    <property type="project" value="UniProtKB"/>
</dbReference>
<dbReference type="GO" id="GO:0031965">
    <property type="term" value="C:nuclear membrane"/>
    <property type="evidence" value="ECO:0007669"/>
    <property type="project" value="UniProtKB-SubCell"/>
</dbReference>
<dbReference type="GO" id="GO:0048471">
    <property type="term" value="C:perinuclear region of cytoplasm"/>
    <property type="evidence" value="ECO:0000314"/>
    <property type="project" value="BHF-UCL"/>
</dbReference>
<dbReference type="GO" id="GO:0016529">
    <property type="term" value="C:sarcoplasmic reticulum"/>
    <property type="evidence" value="ECO:0000314"/>
    <property type="project" value="UniProtKB"/>
</dbReference>
<dbReference type="GO" id="GO:0030315">
    <property type="term" value="C:T-tubule"/>
    <property type="evidence" value="ECO:0000250"/>
    <property type="project" value="BHF-UCL"/>
</dbReference>
<dbReference type="GO" id="GO:0008179">
    <property type="term" value="F:adenylate cyclase binding"/>
    <property type="evidence" value="ECO:0000250"/>
    <property type="project" value="BHF-UCL"/>
</dbReference>
<dbReference type="GO" id="GO:0060090">
    <property type="term" value="F:molecular adaptor activity"/>
    <property type="evidence" value="ECO:0000250"/>
    <property type="project" value="BHF-UCL"/>
</dbReference>
<dbReference type="GO" id="GO:0051018">
    <property type="term" value="F:protein kinase A binding"/>
    <property type="evidence" value="ECO:0000318"/>
    <property type="project" value="GO_Central"/>
</dbReference>
<dbReference type="GO" id="GO:0034237">
    <property type="term" value="F:protein kinase A regulatory subunit binding"/>
    <property type="evidence" value="ECO:0000250"/>
    <property type="project" value="BHF-UCL"/>
</dbReference>
<dbReference type="GO" id="GO:0043495">
    <property type="term" value="F:protein-membrane adaptor activity"/>
    <property type="evidence" value="ECO:0000250"/>
    <property type="project" value="BHF-UCL"/>
</dbReference>
<dbReference type="GO" id="GO:0044325">
    <property type="term" value="F:transmembrane transporter binding"/>
    <property type="evidence" value="ECO:0000353"/>
    <property type="project" value="BHF-UCL"/>
</dbReference>
<dbReference type="GO" id="GO:0001508">
    <property type="term" value="P:action potential"/>
    <property type="evidence" value="ECO:0000314"/>
    <property type="project" value="BHF-UCL"/>
</dbReference>
<dbReference type="GO" id="GO:0007189">
    <property type="term" value="P:adenylate cyclase-activating G protein-coupled receptor signaling pathway"/>
    <property type="evidence" value="ECO:0000303"/>
    <property type="project" value="BHF-UCL"/>
</dbReference>
<dbReference type="GO" id="GO:0071320">
    <property type="term" value="P:cellular response to cAMP"/>
    <property type="evidence" value="ECO:0000314"/>
    <property type="project" value="BHF-UCL"/>
</dbReference>
<dbReference type="GO" id="GO:0071345">
    <property type="term" value="P:cellular response to cytokine stimulus"/>
    <property type="evidence" value="ECO:0000250"/>
    <property type="project" value="BHF-UCL"/>
</dbReference>
<dbReference type="GO" id="GO:0070886">
    <property type="term" value="P:positive regulation of calcineurin-NFAT signaling cascade"/>
    <property type="evidence" value="ECO:0000250"/>
    <property type="project" value="BHF-UCL"/>
</dbReference>
<dbReference type="GO" id="GO:0030307">
    <property type="term" value="P:positive regulation of cell growth"/>
    <property type="evidence" value="ECO:0000250"/>
    <property type="project" value="BHF-UCL"/>
</dbReference>
<dbReference type="GO" id="GO:0061051">
    <property type="term" value="P:positive regulation of cell growth involved in cardiac muscle cell development"/>
    <property type="evidence" value="ECO:0000250"/>
    <property type="project" value="BHF-UCL"/>
</dbReference>
<dbReference type="GO" id="GO:1901381">
    <property type="term" value="P:positive regulation of potassium ion transmembrane transport"/>
    <property type="evidence" value="ECO:0000314"/>
    <property type="project" value="BHF-UCL"/>
</dbReference>
<dbReference type="GO" id="GO:0010739">
    <property type="term" value="P:positive regulation of protein kinase A signaling"/>
    <property type="evidence" value="ECO:0000250"/>
    <property type="project" value="BHF-UCL"/>
</dbReference>
<dbReference type="GO" id="GO:0051281">
    <property type="term" value="P:positive regulation of release of sequestered calcium ion into cytosol"/>
    <property type="evidence" value="ECO:0000250"/>
    <property type="project" value="BHF-UCL"/>
</dbReference>
<dbReference type="GO" id="GO:0006605">
    <property type="term" value="P:protein targeting"/>
    <property type="evidence" value="ECO:0000303"/>
    <property type="project" value="UniProtKB"/>
</dbReference>
<dbReference type="GO" id="GO:0141161">
    <property type="term" value="P:regulation of cAMP/PKA signal transduction"/>
    <property type="evidence" value="ECO:0000250"/>
    <property type="project" value="BHF-UCL"/>
</dbReference>
<dbReference type="GO" id="GO:0060306">
    <property type="term" value="P:regulation of membrane repolarization"/>
    <property type="evidence" value="ECO:0000314"/>
    <property type="project" value="BHF-UCL"/>
</dbReference>
<dbReference type="GO" id="GO:0010880">
    <property type="term" value="P:regulation of release of sequestered calcium ion into cytosol by sarcoplasmic reticulum"/>
    <property type="evidence" value="ECO:0000250"/>
    <property type="project" value="BHF-UCL"/>
</dbReference>
<dbReference type="CDD" id="cd00176">
    <property type="entry name" value="SPEC"/>
    <property type="match status" value="1"/>
</dbReference>
<dbReference type="FunFam" id="1.20.58.60:FF:000113">
    <property type="entry name" value="A-kinase anchor protein 6"/>
    <property type="match status" value="1"/>
</dbReference>
<dbReference type="FunFam" id="1.20.58.60:FF:000117">
    <property type="entry name" value="A-kinase anchor protein 6"/>
    <property type="match status" value="1"/>
</dbReference>
<dbReference type="Gene3D" id="1.20.58.60">
    <property type="match status" value="2"/>
</dbReference>
<dbReference type="InterPro" id="IPR018159">
    <property type="entry name" value="Spectrin/alpha-actinin"/>
</dbReference>
<dbReference type="InterPro" id="IPR002017">
    <property type="entry name" value="Spectrin_repeat"/>
</dbReference>
<dbReference type="PANTHER" id="PTHR14514:SF2">
    <property type="entry name" value="A-KINASE ANCHOR PROTEIN 6"/>
    <property type="match status" value="1"/>
</dbReference>
<dbReference type="PANTHER" id="PTHR14514">
    <property type="entry name" value="PKA ANCHORING PROTEIN"/>
    <property type="match status" value="1"/>
</dbReference>
<dbReference type="Pfam" id="PF00435">
    <property type="entry name" value="Spectrin"/>
    <property type="match status" value="1"/>
</dbReference>
<dbReference type="SMART" id="SM00150">
    <property type="entry name" value="SPEC"/>
    <property type="match status" value="3"/>
</dbReference>
<dbReference type="SUPFAM" id="SSF46966">
    <property type="entry name" value="Spectrin repeat"/>
    <property type="match status" value="3"/>
</dbReference>
<comment type="function">
    <text>Binds to type II regulatory subunits of protein kinase A and anchors/targets them to the nuclear membrane or sarcoplasmic reticulum. May act as an adapter for assembling multiprotein complexes.</text>
</comment>
<comment type="subunit">
    <text evidence="5">Interacts with RII subunit of PKA, phosphatase 2B (calcineurin) and AKAP79. Interacts with SYNPO2.</text>
</comment>
<comment type="subcellular location">
    <subcellularLocation>
        <location>Sarcoplasmic reticulum</location>
    </subcellularLocation>
    <subcellularLocation>
        <location>Nucleus membrane</location>
    </subcellularLocation>
    <text>In heart muscle. Participation of multiple targeting signals allow correct intracellular targeting. These may be repeated motifs rich in basic and hydrophobic amino acids, palmitoylated/myristoylated motifs or alternatively splice targeting sequences.</text>
</comment>
<comment type="alternative products">
    <event type="alternative splicing"/>
    <isoform>
        <id>Q13023-1</id>
        <name>1</name>
        <sequence type="displayed"/>
    </isoform>
    <isoform>
        <id>Q13023-2</id>
        <name>2</name>
        <sequence type="described" ref="VSP_054497 VSP_054498"/>
    </isoform>
</comment>
<comment type="tissue specificity">
    <text>Highly expressed in cardiac and skeletal muscle, followed by brain.</text>
</comment>
<comment type="domain">
    <text>RII-alpha binding site, predicted to form an amphipathic helix, could participate in protein-protein interactions with a complementary surface on the R-subunit dimer.</text>
</comment>
<comment type="sequence caution" evidence="7">
    <conflict type="erroneous initiation">
        <sequence resource="EMBL-CDS" id="BAA20770"/>
    </conflict>
</comment>
<proteinExistence type="evidence at protein level"/>
<evidence type="ECO:0000250" key="1">
    <source>
        <dbReference type="UniProtKB" id="Q9WVC7"/>
    </source>
</evidence>
<evidence type="ECO:0000256" key="2">
    <source>
        <dbReference type="SAM" id="MobiDB-lite"/>
    </source>
</evidence>
<evidence type="ECO:0000269" key="3">
    <source>
    </source>
</evidence>
<evidence type="ECO:0000269" key="4">
    <source>
    </source>
</evidence>
<evidence type="ECO:0000269" key="5">
    <source>
    </source>
</evidence>
<evidence type="ECO:0000303" key="6">
    <source>
    </source>
</evidence>
<evidence type="ECO:0000305" key="7"/>
<sequence>MLTMSVTLSPLRSQDLDPMATDASPMAINMTPTVEQGEGEEAMKDMDSDQQYEKPPPLHTGADWKIVLHLPEIETWLRMTSERVRDLTYSVQQDSDSKHVDVHLVQLKDICEDISDHVEQIHALLETEFSLKLLSYSVNVIVDIHAVQLLWHQLRVSVLVLRERILQGLQDANGNYTRQTDILQAFSEETKEGRLDSLTEVDDSGQLTIKCSQNYLSLDCGITAFELSDYSPSEDLLSGLGDMTSSQVKTKPFDSWSYSEMEKEFPELIRSVGLLTVAADSISTNGSEAVTEEVSQVSLSVDDKGGCEEDNASAVEEQPGLTLGVSSSSGEALTNAAQPSSETVQQESSSSSHHDAKNQQPVPCENATPKRTIRDCFNYNEDSPTQPTLPKRGLFLKEETFKNDLKGNGGKRQMVDLKPEMSRSTPSLVDPPDRSKLCLVLQSSYPNSPSAASQSYECLHKVGNGNLENTVKFHIKEISSSLGRLNDCYKEKSRLKKPHKTSEEVPPCRTPKRGTGSGKQAKNTKSSAVPNGELSYTSKAIEGPQTNSASTSSLEPCNQRSWNAKLQLQSETSSSPAFTQSSESSVGSDNIMSPVPLLSKHKSKKGQASSPSHVTRNGEVVEAWYGSDEYLALPSHLKQTEVLALKLENLTKLLPQKPRGETIQNIDDWELSEMNSDSEIYPTYHVKKKHTRLGRVSPSSSSDIASSLGESIESGPLSDILSDEESSMPLAGMKKYADEKSERASSSEKNESHSATKSALIQKLMQDIQHQDNYEAIWEKIEGFVNKLDEFIQWLNEAMETTENWTPPKAEMDDLKLYLETHLSFKLNVDSHCALKEAVEEEGHQLLELIASHKAGLKDMLRMIASQWKELQRQIKRQHSWILRALDTIKAEILATDVSVEDEEGTGSPKAEVQLCYLEAQRDAVEQMSLKLYSEQYTSSSKRKEEFADMSKVHSVGSNGLLDFDSEYQELWDWLIDMESLVMDSHDLMMSEEQQQHLYKRYSVEMSIRHLKKTELLSKVEALKKGGVLLPNDLLEKVDSINEKWELLGKTLGEKIQDTMAGHSGSSPRDLLSPESGSLVRQLEVRIKELKGWLRDTELFIFNSCLRQEKEGTMNTEKQLQYFKSLCREIKQRRRGVASILRLCQHLLDDRETCNLNADHQPMQLIIVNLERRWEAIVMQAVQWQTRLQKKMGKESETLNVIDPGLMDLNGMSEDALEWDEMDISNKLISLNEESNDLDQELQPVIPSLKLGETSNEDPGYDEEADNHGGSQYASNITAPSSPHIYQVYSLHNVELYEDNHMPFLKNNPKVTGMTQPNVLTKSLSKDSSFSSTKSLPDLLGGSNLVKPCACHGGDMSQNSGSESGIVSEGDTETTTNSEMCLLNAVDGSPSNLETEHLDPQMGDAVNVLKQKFTDEGESIKLPNSSQSSISPVGCVNGKVGDLNSITKHTPDCLGEELQGKHDVFTFYDYSYLQGSKLKLPMIMKQSQSEKAHVEDPLLRGFYFDKKSCKSKHQTTELQPDVPPHERILASASHEMDRISYKSGNIEKTFTGMQNAKQLSLLSHSSSIESLSPGGDLFGLGIFKNGSDSLQRSTSLESWLTSYKSNEDLFSCHSSGDISVSSGSVGELSKRTLDLLNRLENIQSPSEQKIKRSVSDITLQSSSQKMSFTGQMSLDIASSINEDSAASLTELSSSDELSLCSEDIVLHKNKIPESNASFRKRLTRSVADESDVNVSMIVNVSCTSACTDDEDDSDLLSSSTLTLTEEELCIKDEDDDSSIATDDEIYEDCTLMSGLDYIKNELQTWIRPKLSLTRDKKRCNVSDEMKGSKDISSSEMTNPSDTLNIETLLNGSVKRVSENNGNGKNSSHTHELGTKRENKKTIFKVNKDPYVADMENGNIEGIPERQKGKPNVTSKVSENLGSHGKEISESEHCKCKALMDSLDDSNTAGKEFVSQDVRHLPKKCPNHHHFENQSTASTPTEKSFSELALETRFNNRQDSDALKSSDDAPSMAGKSAGCCLALEQNGTEENASISNISCCNCEPDVFHQKDAEDCSVHNFVKEIIDMASTALKSKSQPENEVAAPTSLTQIKEKVLEHSHRPIQLRKGDFYSYLSLSSHDSDCGEVTNYIEEKSSTPLPLDTTDSGLDDKEDIECFFEACVEGDSDGEEPCFSSAPPNESAVPSEAAMPLQATACSSEFSDSSLSADDADTVALSSPSSQERAEVGKEVNGLPQTSSGCAENLEFTPSKLDSEKESSGKPGESGMPEEHNAASAKSKVQDLSLKANQPTDKAALHPSPKTLTCEENLLNLHEKRHRNMHR</sequence>
<feature type="chain" id="PRO_0000064530" description="A-kinase anchor protein 6">
    <location>
        <begin position="1"/>
        <end position="2319"/>
    </location>
</feature>
<feature type="repeat" description="Spectrin 1">
    <location>
        <begin position="762"/>
        <end position="848"/>
    </location>
</feature>
<feature type="repeat" description="Spectrin 2">
    <location>
        <begin position="1036"/>
        <end position="1150"/>
    </location>
</feature>
<feature type="region of interest" description="Disordered" evidence="2">
    <location>
        <begin position="1"/>
        <end position="24"/>
    </location>
</feature>
<feature type="region of interest" description="Disordered" evidence="2">
    <location>
        <begin position="301"/>
        <end position="369"/>
    </location>
</feature>
<feature type="region of interest" description="Disordered" evidence="2">
    <location>
        <begin position="493"/>
        <end position="532"/>
    </location>
</feature>
<feature type="region of interest" description="Disordered" evidence="2">
    <location>
        <begin position="566"/>
        <end position="614"/>
    </location>
</feature>
<feature type="region of interest" description="Disordered" evidence="2">
    <location>
        <begin position="691"/>
        <end position="757"/>
    </location>
</feature>
<feature type="region of interest" description="Disordered" evidence="2">
    <location>
        <begin position="1250"/>
        <end position="1272"/>
    </location>
</feature>
<feature type="region of interest" description="Disordered" evidence="2">
    <location>
        <begin position="1821"/>
        <end position="1842"/>
    </location>
</feature>
<feature type="region of interest" description="Disordered" evidence="2">
    <location>
        <begin position="1900"/>
        <end position="1925"/>
    </location>
</feature>
<feature type="region of interest" description="Disordered" evidence="2">
    <location>
        <begin position="1963"/>
        <end position="1983"/>
    </location>
</feature>
<feature type="region of interest" description="PKA-RII subunit binding domain">
    <location>
        <begin position="2063"/>
        <end position="2076"/>
    </location>
</feature>
<feature type="region of interest" description="Disordered" evidence="2">
    <location>
        <begin position="2198"/>
        <end position="2319"/>
    </location>
</feature>
<feature type="compositionally biased region" description="Polar residues" evidence="2">
    <location>
        <begin position="1"/>
        <end position="12"/>
    </location>
</feature>
<feature type="compositionally biased region" description="Polar residues" evidence="2">
    <location>
        <begin position="324"/>
        <end position="339"/>
    </location>
</feature>
<feature type="compositionally biased region" description="Low complexity" evidence="2">
    <location>
        <begin position="340"/>
        <end position="351"/>
    </location>
</feature>
<feature type="compositionally biased region" description="Polar residues" evidence="2">
    <location>
        <begin position="518"/>
        <end position="532"/>
    </location>
</feature>
<feature type="compositionally biased region" description="Polar residues" evidence="2">
    <location>
        <begin position="566"/>
        <end position="591"/>
    </location>
</feature>
<feature type="compositionally biased region" description="Low complexity" evidence="2">
    <location>
        <begin position="697"/>
        <end position="711"/>
    </location>
</feature>
<feature type="compositionally biased region" description="Basic and acidic residues" evidence="2">
    <location>
        <begin position="735"/>
        <end position="754"/>
    </location>
</feature>
<feature type="compositionally biased region" description="Acidic residues" evidence="2">
    <location>
        <begin position="1255"/>
        <end position="1265"/>
    </location>
</feature>
<feature type="compositionally biased region" description="Polar residues" evidence="2">
    <location>
        <begin position="1830"/>
        <end position="1842"/>
    </location>
</feature>
<feature type="compositionally biased region" description="Polar residues" evidence="2">
    <location>
        <begin position="1911"/>
        <end position="1920"/>
    </location>
</feature>
<feature type="compositionally biased region" description="Polar residues" evidence="2">
    <location>
        <begin position="1972"/>
        <end position="1982"/>
    </location>
</feature>
<feature type="compositionally biased region" description="Low complexity" evidence="2">
    <location>
        <begin position="2198"/>
        <end position="2215"/>
    </location>
</feature>
<feature type="modified residue" description="Phosphoserine" evidence="1">
    <location>
        <position position="1073"/>
    </location>
</feature>
<feature type="modified residue" description="Phosphoserine" evidence="1">
    <location>
        <position position="1570"/>
    </location>
</feature>
<feature type="modified residue" description="Phosphoserine" evidence="1">
    <location>
        <position position="1595"/>
    </location>
</feature>
<feature type="splice variant" id="VSP_054497" description="In isoform 2." evidence="6">
    <original>KTLGEKIQDTMAGHSGSSPRDLLSPE</original>
    <variation>VFAFLLLFVGYVYIFCVVKYSVRFLI</variation>
    <location>
        <begin position="1050"/>
        <end position="1075"/>
    </location>
</feature>
<feature type="splice variant" id="VSP_054498" description="In isoform 2." evidence="6">
    <location>
        <begin position="1076"/>
        <end position="2319"/>
    </location>
</feature>
<feature type="sequence variant" id="VAR_028171" description="In dbSNP:rs3742926.">
    <original>A</original>
    <variation>V</variation>
    <location>
        <position position="337"/>
    </location>
</feature>
<feature type="sequence variant" id="VAR_028172" description="In dbSNP:rs17099240.">
    <original>N</original>
    <variation>S</variation>
    <location>
        <position position="408"/>
    </location>
</feature>
<feature type="sequence variant" id="VAR_050653" description="In dbSNP:rs35210906.">
    <original>N</original>
    <variation>D</variation>
    <location>
        <position position="558"/>
    </location>
</feature>
<feature type="sequence variant" id="VAR_050654" description="In dbSNP:rs34572259.">
    <original>E</original>
    <variation>K</variation>
    <location>
        <position position="892"/>
    </location>
</feature>
<feature type="sequence variant" id="VAR_035781" description="In a breast cancer sample; somatic mutation." evidence="4">
    <original>K</original>
    <variation>M</variation>
    <location>
        <position position="910"/>
    </location>
</feature>
<feature type="sequence variant" id="VAR_035782" description="In a breast cancer sample; somatic mutation." evidence="4">
    <original>M</original>
    <variation>I</variation>
    <location>
        <position position="1192"/>
    </location>
</feature>
<feature type="sequence variant" id="VAR_028173" description="In dbSNP:rs11845640." evidence="3">
    <original>A</original>
    <variation>V</variation>
    <location>
        <position position="1492"/>
    </location>
</feature>
<feature type="sequence variant" id="VAR_050655" description="In dbSNP:rs17099587.">
    <original>T</original>
    <variation>A</variation>
    <location>
        <position position="1516"/>
    </location>
</feature>
<feature type="sequence variant" id="VAR_050656" description="In dbSNP:rs34711402.">
    <original>V</original>
    <variation>I</variation>
    <location>
        <position position="1522"/>
    </location>
</feature>
<feature type="sequence variant" id="VAR_035783" description="In a breast cancer sample; somatic mutation." evidence="4">
    <original>E</original>
    <variation>Q</variation>
    <location>
        <position position="1702"/>
    </location>
</feature>
<feature type="sequence variant" id="VAR_035784" description="In a colorectal cancer sample; somatic mutation; dbSNP:rs745389246." evidence="4">
    <original>P</original>
    <variation>T</variation>
    <location>
        <position position="1839"/>
    </location>
</feature>
<feature type="sequence variant" id="VAR_028174" description="In dbSNP:rs1051695.">
    <original>N</original>
    <variation>D</variation>
    <location>
        <position position="2035"/>
    </location>
</feature>
<feature type="sequence variant" id="VAR_028175" description="In dbSNP:rs4647899.">
    <original>F</original>
    <variation>Y</variation>
    <location>
        <position position="2171"/>
    </location>
</feature>
<feature type="sequence variant" id="VAR_028176" description="In dbSNP:rs4402458.">
    <original>D</original>
    <variation>H</variation>
    <location>
        <position position="2209"/>
    </location>
</feature>
<feature type="sequence variant" id="VAR_050657" description="In dbSNP:rs35977369.">
    <original>E</original>
    <variation>D</variation>
    <location>
        <position position="2267"/>
    </location>
</feature>
<feature type="sequence conflict" description="In Ref. 1; AAA92354." evidence="7" ref="1">
    <original>W</original>
    <variation>C</variation>
    <location>
        <position position="974"/>
    </location>
</feature>
<gene>
    <name type="primary">AKAP6</name>
    <name type="synonym">AKAP100</name>
    <name type="synonym">KIAA0311</name>
</gene>
<accession>Q13023</accession>
<accession>A7E242</accession>
<accession>A7E2D4</accession>
<accession>O15028</accession>
<keyword id="KW-0025">Alternative splicing</keyword>
<keyword id="KW-0472">Membrane</keyword>
<keyword id="KW-0539">Nucleus</keyword>
<keyword id="KW-0597">Phosphoprotein</keyword>
<keyword id="KW-1267">Proteomics identification</keyword>
<keyword id="KW-1185">Reference proteome</keyword>
<keyword id="KW-0677">Repeat</keyword>
<keyword id="KW-0703">Sarcoplasmic reticulum</keyword>
<name>AKAP6_HUMAN</name>
<protein>
    <recommendedName>
        <fullName>A-kinase anchor protein 6</fullName>
        <shortName>AKAP-6</shortName>
    </recommendedName>
    <alternativeName>
        <fullName>A-kinase anchor protein 100 kDa</fullName>
        <shortName>AKAP 100</shortName>
    </alternativeName>
    <alternativeName>
        <fullName>Protein kinase A-anchoring protein 6</fullName>
        <shortName>PRKA6</shortName>
    </alternativeName>
    <alternativeName>
        <fullName>mAKAP</fullName>
    </alternativeName>
</protein>
<reference key="1">
    <citation type="journal article" date="1999" name="J. Cell Sci.">
        <title>mAKAP: an A-kinase anchoring protein targeted to the nuclear membrane of differentiated myocytes.</title>
        <authorList>
            <person name="Kapiloff M.S."/>
            <person name="Shillace R.V."/>
            <person name="Westphal A.M."/>
            <person name="Scott J.D."/>
        </authorList>
    </citation>
    <scope>NUCLEOTIDE SEQUENCE [MRNA] (ISOFORM 1)</scope>
    <scope>VARIANT VAL-1492</scope>
</reference>
<reference key="2">
    <citation type="journal article" date="1997" name="DNA Res.">
        <title>Prediction of the coding sequences of unidentified human genes. VII. The complete sequences of 100 new cDNA clones from brain which can code for large proteins in vitro.</title>
        <authorList>
            <person name="Nagase T."/>
            <person name="Ishikawa K."/>
            <person name="Nakajima D."/>
            <person name="Ohira M."/>
            <person name="Seki N."/>
            <person name="Miyajima N."/>
            <person name="Tanaka A."/>
            <person name="Kotani H."/>
            <person name="Nomura N."/>
            <person name="Ohara O."/>
        </authorList>
    </citation>
    <scope>NUCLEOTIDE SEQUENCE [LARGE SCALE MRNA] (ISOFORM 1)</scope>
    <source>
        <tissue>Brain</tissue>
    </source>
</reference>
<reference key="3">
    <citation type="journal article" date="2002" name="DNA Res.">
        <title>Construction of expression-ready cDNA clones for KIAA genes: manual curation of 330 KIAA cDNA clones.</title>
        <authorList>
            <person name="Nakajima D."/>
            <person name="Okazaki N."/>
            <person name="Yamakawa H."/>
            <person name="Kikuno R."/>
            <person name="Ohara O."/>
            <person name="Nagase T."/>
        </authorList>
    </citation>
    <scope>SEQUENCE REVISION</scope>
</reference>
<reference key="4">
    <citation type="journal article" date="2003" name="Nature">
        <title>The DNA sequence and analysis of human chromosome 14.</title>
        <authorList>
            <person name="Heilig R."/>
            <person name="Eckenberg R."/>
            <person name="Petit J.-L."/>
            <person name="Fonknechten N."/>
            <person name="Da Silva C."/>
            <person name="Cattolico L."/>
            <person name="Levy M."/>
            <person name="Barbe V."/>
            <person name="De Berardinis V."/>
            <person name="Ureta-Vidal A."/>
            <person name="Pelletier E."/>
            <person name="Vico V."/>
            <person name="Anthouard V."/>
            <person name="Rowen L."/>
            <person name="Madan A."/>
            <person name="Qin S."/>
            <person name="Sun H."/>
            <person name="Du H."/>
            <person name="Pepin K."/>
            <person name="Artiguenave F."/>
            <person name="Robert C."/>
            <person name="Cruaud C."/>
            <person name="Bruels T."/>
            <person name="Jaillon O."/>
            <person name="Friedlander L."/>
            <person name="Samson G."/>
            <person name="Brottier P."/>
            <person name="Cure S."/>
            <person name="Segurens B."/>
            <person name="Aniere F."/>
            <person name="Samain S."/>
            <person name="Crespeau H."/>
            <person name="Abbasi N."/>
            <person name="Aiach N."/>
            <person name="Boscus D."/>
            <person name="Dickhoff R."/>
            <person name="Dors M."/>
            <person name="Dubois I."/>
            <person name="Friedman C."/>
            <person name="Gouyvenoux M."/>
            <person name="James R."/>
            <person name="Madan A."/>
            <person name="Mairey-Estrada B."/>
            <person name="Mangenot S."/>
            <person name="Martins N."/>
            <person name="Menard M."/>
            <person name="Oztas S."/>
            <person name="Ratcliffe A."/>
            <person name="Shaffer T."/>
            <person name="Trask B."/>
            <person name="Vacherie B."/>
            <person name="Bellemere C."/>
            <person name="Belser C."/>
            <person name="Besnard-Gonnet M."/>
            <person name="Bartol-Mavel D."/>
            <person name="Boutard M."/>
            <person name="Briez-Silla S."/>
            <person name="Combette S."/>
            <person name="Dufosse-Laurent V."/>
            <person name="Ferron C."/>
            <person name="Lechaplais C."/>
            <person name="Louesse C."/>
            <person name="Muselet D."/>
            <person name="Magdelenat G."/>
            <person name="Pateau E."/>
            <person name="Petit E."/>
            <person name="Sirvain-Trukniewicz P."/>
            <person name="Trybou A."/>
            <person name="Vega-Czarny N."/>
            <person name="Bataille E."/>
            <person name="Bluet E."/>
            <person name="Bordelais I."/>
            <person name="Dubois M."/>
            <person name="Dumont C."/>
            <person name="Guerin T."/>
            <person name="Haffray S."/>
            <person name="Hammadi R."/>
            <person name="Muanga J."/>
            <person name="Pellouin V."/>
            <person name="Robert D."/>
            <person name="Wunderle E."/>
            <person name="Gauguet G."/>
            <person name="Roy A."/>
            <person name="Sainte-Marthe L."/>
            <person name="Verdier J."/>
            <person name="Verdier-Discala C."/>
            <person name="Hillier L.W."/>
            <person name="Fulton L."/>
            <person name="McPherson J."/>
            <person name="Matsuda F."/>
            <person name="Wilson R."/>
            <person name="Scarpelli C."/>
            <person name="Gyapay G."/>
            <person name="Wincker P."/>
            <person name="Saurin W."/>
            <person name="Quetier F."/>
            <person name="Waterston R."/>
            <person name="Hood L."/>
            <person name="Weissenbach J."/>
        </authorList>
    </citation>
    <scope>NUCLEOTIDE SEQUENCE [LARGE SCALE GENOMIC DNA]</scope>
</reference>
<reference key="5">
    <citation type="submission" date="2005-09" db="EMBL/GenBank/DDBJ databases">
        <authorList>
            <person name="Mural R.J."/>
            <person name="Istrail S."/>
            <person name="Sutton G.G."/>
            <person name="Florea L."/>
            <person name="Halpern A.L."/>
            <person name="Mobarry C.M."/>
            <person name="Lippert R."/>
            <person name="Walenz B."/>
            <person name="Shatkay H."/>
            <person name="Dew I."/>
            <person name="Miller J.R."/>
            <person name="Flanigan M.J."/>
            <person name="Edwards N.J."/>
            <person name="Bolanos R."/>
            <person name="Fasulo D."/>
            <person name="Halldorsson B.V."/>
            <person name="Hannenhalli S."/>
            <person name="Turner R."/>
            <person name="Yooseph S."/>
            <person name="Lu F."/>
            <person name="Nusskern D.R."/>
            <person name="Shue B.C."/>
            <person name="Zheng X.H."/>
            <person name="Zhong F."/>
            <person name="Delcher A.L."/>
            <person name="Huson D.H."/>
            <person name="Kravitz S.A."/>
            <person name="Mouchard L."/>
            <person name="Reinert K."/>
            <person name="Remington K.A."/>
            <person name="Clark A.G."/>
            <person name="Waterman M.S."/>
            <person name="Eichler E.E."/>
            <person name="Adams M.D."/>
            <person name="Hunkapiller M.W."/>
            <person name="Myers E.W."/>
            <person name="Venter J.C."/>
        </authorList>
    </citation>
    <scope>NUCLEOTIDE SEQUENCE [LARGE SCALE GENOMIC DNA]</scope>
</reference>
<reference key="6">
    <citation type="journal article" date="2004" name="Genome Res.">
        <title>The status, quality, and expansion of the NIH full-length cDNA project: the Mammalian Gene Collection (MGC).</title>
        <authorList>
            <consortium name="The MGC Project Team"/>
        </authorList>
    </citation>
    <scope>NUCLEOTIDE SEQUENCE [LARGE SCALE MRNA] (ISOFORMS 1 AND 2)</scope>
</reference>
<reference key="7">
    <citation type="journal article" date="1995" name="J. Biol. Chem.">
        <title>Cloning and characterization of A-kinase anchor protein 100 (AKAP100). A protein that targets A-kinase to the sarcoplasmic reticulum.</title>
        <authorList>
            <person name="McCartney S."/>
            <person name="Little B.M."/>
            <person name="Langeberg L.K."/>
            <person name="Scott J.D."/>
        </authorList>
    </citation>
    <scope>NUCLEOTIDE SEQUENCE [MRNA] OF 1666-2319 (ISOFORM 1)</scope>
    <source>
        <tissue>Hippocampus</tissue>
    </source>
</reference>
<reference key="8">
    <citation type="journal article" date="2007" name="Mol. Cell. Biol.">
        <title>Protein kinase A, Ca2+/calmodulin-dependent kinase II, and calcineurin regulate the intracellular trafficking of myopodin between the Z-disc and the nucleus of cardiac myocytes.</title>
        <authorList>
            <person name="Faul C."/>
            <person name="Dhume A."/>
            <person name="Schecter A.D."/>
            <person name="Mundel P."/>
        </authorList>
    </citation>
    <scope>INTERACTION WITH SYNPO2</scope>
</reference>
<reference key="9">
    <citation type="journal article" date="2008" name="Proc. Natl. Acad. Sci. U.S.A.">
        <title>A quantitative atlas of mitotic phosphorylation.</title>
        <authorList>
            <person name="Dephoure N."/>
            <person name="Zhou C."/>
            <person name="Villen J."/>
            <person name="Beausoleil S.A."/>
            <person name="Bakalarski C.E."/>
            <person name="Elledge S.J."/>
            <person name="Gygi S.P."/>
        </authorList>
    </citation>
    <scope>IDENTIFICATION BY MASS SPECTROMETRY [LARGE SCALE ANALYSIS]</scope>
    <source>
        <tissue>Cervix carcinoma</tissue>
    </source>
</reference>
<reference key="10">
    <citation type="journal article" date="2006" name="Science">
        <title>The consensus coding sequences of human breast and colorectal cancers.</title>
        <authorList>
            <person name="Sjoeblom T."/>
            <person name="Jones S."/>
            <person name="Wood L.D."/>
            <person name="Parsons D.W."/>
            <person name="Lin J."/>
            <person name="Barber T.D."/>
            <person name="Mandelker D."/>
            <person name="Leary R.J."/>
            <person name="Ptak J."/>
            <person name="Silliman N."/>
            <person name="Szabo S."/>
            <person name="Buckhaults P."/>
            <person name="Farrell C."/>
            <person name="Meeh P."/>
            <person name="Markowitz S.D."/>
            <person name="Willis J."/>
            <person name="Dawson D."/>
            <person name="Willson J.K.V."/>
            <person name="Gazdar A.F."/>
            <person name="Hartigan J."/>
            <person name="Wu L."/>
            <person name="Liu C."/>
            <person name="Parmigiani G."/>
            <person name="Park B.H."/>
            <person name="Bachman K.E."/>
            <person name="Papadopoulos N."/>
            <person name="Vogelstein B."/>
            <person name="Kinzler K.W."/>
            <person name="Velculescu V.E."/>
        </authorList>
    </citation>
    <scope>VARIANTS [LARGE SCALE ANALYSIS] MET-910; ILE-1192; GLN-1702 AND THR-1839</scope>
</reference>